<reference key="1">
    <citation type="journal article" date="1995" name="J. Biol. Chem.">
        <title>RNA trans-splicing in flatworms. Analysis of trans-spliced mRNAs and genes in the human parasite, Schistosoma mansoni.</title>
        <authorList>
            <person name="Davis R.E."/>
            <person name="Hardwick C."/>
            <person name="Tavernier P."/>
            <person name="Hodgson S."/>
            <person name="Singh H."/>
        </authorList>
    </citation>
    <scope>NUCLEOTIDE SEQUENCE [GENOMIC DNA / MRNA]</scope>
    <source>
        <strain>Puerto Rican</strain>
    </source>
</reference>
<comment type="catalytic activity">
    <reaction>
        <text>(2R)-2-phosphoglycerate = phosphoenolpyruvate + H2O</text>
        <dbReference type="Rhea" id="RHEA:10164"/>
        <dbReference type="ChEBI" id="CHEBI:15377"/>
        <dbReference type="ChEBI" id="CHEBI:58289"/>
        <dbReference type="ChEBI" id="CHEBI:58702"/>
        <dbReference type="EC" id="4.2.1.11"/>
    </reaction>
</comment>
<comment type="cofactor">
    <cofactor evidence="1">
        <name>Mg(2+)</name>
        <dbReference type="ChEBI" id="CHEBI:18420"/>
    </cofactor>
    <text evidence="1">Mg(2+) is required for catalysis and for stabilizing the dimer.</text>
</comment>
<comment type="pathway">
    <text>Carbohydrate degradation; glycolysis; pyruvate from D-glyceraldehyde 3-phosphate: step 4/5.</text>
</comment>
<comment type="subunit">
    <text evidence="1">Homodimer.</text>
</comment>
<comment type="subcellular location">
    <subcellularLocation>
        <location>Cytoplasm</location>
    </subcellularLocation>
</comment>
<comment type="similarity">
    <text evidence="2">Belongs to the enolase family.</text>
</comment>
<accession>Q27877</accession>
<feature type="chain" id="PRO_0000134084" description="Enolase">
    <location>
        <begin position="1"/>
        <end position="434"/>
    </location>
</feature>
<feature type="active site" description="Proton donor" evidence="1">
    <location>
        <position position="210"/>
    </location>
</feature>
<feature type="active site" description="Proton acceptor" evidence="1">
    <location>
        <position position="344"/>
    </location>
</feature>
<feature type="binding site" evidence="1">
    <location>
        <position position="158"/>
    </location>
    <ligand>
        <name>substrate</name>
    </ligand>
</feature>
<feature type="binding site" evidence="1">
    <location>
        <position position="167"/>
    </location>
    <ligand>
        <name>substrate</name>
    </ligand>
</feature>
<feature type="binding site" evidence="1">
    <location>
        <position position="245"/>
    </location>
    <ligand>
        <name>Mg(2+)</name>
        <dbReference type="ChEBI" id="CHEBI:18420"/>
    </ligand>
</feature>
<feature type="binding site" evidence="1">
    <location>
        <position position="294"/>
    </location>
    <ligand>
        <name>Mg(2+)</name>
        <dbReference type="ChEBI" id="CHEBI:18420"/>
    </ligand>
</feature>
<feature type="binding site" evidence="1">
    <location>
        <position position="294"/>
    </location>
    <ligand>
        <name>substrate</name>
    </ligand>
</feature>
<feature type="binding site" evidence="1">
    <location>
        <position position="319"/>
    </location>
    <ligand>
        <name>Mg(2+)</name>
        <dbReference type="ChEBI" id="CHEBI:18420"/>
    </ligand>
</feature>
<feature type="binding site" evidence="1">
    <location>
        <position position="319"/>
    </location>
    <ligand>
        <name>substrate</name>
    </ligand>
</feature>
<feature type="binding site" evidence="1">
    <location>
        <begin position="371"/>
        <end position="374"/>
    </location>
    <ligand>
        <name>substrate</name>
    </ligand>
</feature>
<feature type="binding site" evidence="1">
    <location>
        <position position="395"/>
    </location>
    <ligand>
        <name>substrate</name>
    </ligand>
</feature>
<name>ENO_SCHMA</name>
<keyword id="KW-0963">Cytoplasm</keyword>
<keyword id="KW-0324">Glycolysis</keyword>
<keyword id="KW-0456">Lyase</keyword>
<keyword id="KW-0460">Magnesium</keyword>
<keyword id="KW-0479">Metal-binding</keyword>
<keyword id="KW-1185">Reference proteome</keyword>
<proteinExistence type="evidence at transcript level"/>
<organism>
    <name type="scientific">Schistosoma mansoni</name>
    <name type="common">Blood fluke</name>
    <dbReference type="NCBI Taxonomy" id="6183"/>
    <lineage>
        <taxon>Eukaryota</taxon>
        <taxon>Metazoa</taxon>
        <taxon>Spiralia</taxon>
        <taxon>Lophotrochozoa</taxon>
        <taxon>Platyhelminthes</taxon>
        <taxon>Trematoda</taxon>
        <taxon>Digenea</taxon>
        <taxon>Strigeidida</taxon>
        <taxon>Schistosomatoidea</taxon>
        <taxon>Schistosomatidae</taxon>
        <taxon>Schistosoma</taxon>
    </lineage>
</organism>
<dbReference type="EC" id="4.2.1.11"/>
<dbReference type="EMBL" id="U33177">
    <property type="protein sequence ID" value="AAC46884.1"/>
    <property type="molecule type" value="Genomic_DNA"/>
</dbReference>
<dbReference type="EMBL" id="U30177">
    <property type="protein sequence ID" value="AAC46884.1"/>
    <property type="status" value="JOINED"/>
    <property type="molecule type" value="Genomic_DNA"/>
</dbReference>
<dbReference type="EMBL" id="U30175">
    <property type="protein sequence ID" value="AAC46886.1"/>
    <property type="molecule type" value="mRNA"/>
</dbReference>
<dbReference type="SMR" id="Q27877"/>
<dbReference type="FunCoup" id="Q27877">
    <property type="interactions" value="809"/>
</dbReference>
<dbReference type="STRING" id="6183.Q27877"/>
<dbReference type="EnsemblMetazoa" id="Smp_024110.1">
    <property type="protein sequence ID" value="Smp_024110.1"/>
    <property type="gene ID" value="Smp_024110"/>
</dbReference>
<dbReference type="WBParaSite" id="Smp_024110.1">
    <property type="protein sequence ID" value="Smp_024110.1"/>
    <property type="gene ID" value="Smp_024110"/>
</dbReference>
<dbReference type="eggNOG" id="KOG2670">
    <property type="taxonomic scope" value="Eukaryota"/>
</dbReference>
<dbReference type="HOGENOM" id="CLU_031223_0_0_1"/>
<dbReference type="InParanoid" id="Q27877"/>
<dbReference type="UniPathway" id="UPA00109">
    <property type="reaction ID" value="UER00187"/>
</dbReference>
<dbReference type="Proteomes" id="UP000008854">
    <property type="component" value="Unassembled WGS sequence"/>
</dbReference>
<dbReference type="GO" id="GO:0000015">
    <property type="term" value="C:phosphopyruvate hydratase complex"/>
    <property type="evidence" value="ECO:0007669"/>
    <property type="project" value="InterPro"/>
</dbReference>
<dbReference type="GO" id="GO:0000287">
    <property type="term" value="F:magnesium ion binding"/>
    <property type="evidence" value="ECO:0007669"/>
    <property type="project" value="InterPro"/>
</dbReference>
<dbReference type="GO" id="GO:0004634">
    <property type="term" value="F:phosphopyruvate hydratase activity"/>
    <property type="evidence" value="ECO:0007669"/>
    <property type="project" value="UniProtKB-EC"/>
</dbReference>
<dbReference type="GO" id="GO:0006096">
    <property type="term" value="P:glycolytic process"/>
    <property type="evidence" value="ECO:0007669"/>
    <property type="project" value="UniProtKB-UniPathway"/>
</dbReference>
<dbReference type="CDD" id="cd03313">
    <property type="entry name" value="enolase"/>
    <property type="match status" value="1"/>
</dbReference>
<dbReference type="FunFam" id="3.30.390.10:FF:000001">
    <property type="entry name" value="Enolase"/>
    <property type="match status" value="1"/>
</dbReference>
<dbReference type="FunFam" id="3.20.20.120:FF:000002">
    <property type="entry name" value="Enolase 1"/>
    <property type="match status" value="1"/>
</dbReference>
<dbReference type="Gene3D" id="3.20.20.120">
    <property type="entry name" value="Enolase-like C-terminal domain"/>
    <property type="match status" value="1"/>
</dbReference>
<dbReference type="Gene3D" id="3.30.390.10">
    <property type="entry name" value="Enolase-like, N-terminal domain"/>
    <property type="match status" value="1"/>
</dbReference>
<dbReference type="HAMAP" id="MF_00318">
    <property type="entry name" value="Enolase"/>
    <property type="match status" value="1"/>
</dbReference>
<dbReference type="InterPro" id="IPR000941">
    <property type="entry name" value="Enolase"/>
</dbReference>
<dbReference type="InterPro" id="IPR036849">
    <property type="entry name" value="Enolase-like_C_sf"/>
</dbReference>
<dbReference type="InterPro" id="IPR029017">
    <property type="entry name" value="Enolase-like_N"/>
</dbReference>
<dbReference type="InterPro" id="IPR020810">
    <property type="entry name" value="Enolase_C"/>
</dbReference>
<dbReference type="InterPro" id="IPR020809">
    <property type="entry name" value="Enolase_CS"/>
</dbReference>
<dbReference type="InterPro" id="IPR020811">
    <property type="entry name" value="Enolase_N"/>
</dbReference>
<dbReference type="NCBIfam" id="TIGR01060">
    <property type="entry name" value="eno"/>
    <property type="match status" value="1"/>
</dbReference>
<dbReference type="PANTHER" id="PTHR11902">
    <property type="entry name" value="ENOLASE"/>
    <property type="match status" value="1"/>
</dbReference>
<dbReference type="PANTHER" id="PTHR11902:SF1">
    <property type="entry name" value="ENOLASE"/>
    <property type="match status" value="1"/>
</dbReference>
<dbReference type="Pfam" id="PF00113">
    <property type="entry name" value="Enolase_C"/>
    <property type="match status" value="1"/>
</dbReference>
<dbReference type="Pfam" id="PF03952">
    <property type="entry name" value="Enolase_N"/>
    <property type="match status" value="1"/>
</dbReference>
<dbReference type="PIRSF" id="PIRSF001400">
    <property type="entry name" value="Enolase"/>
    <property type="match status" value="1"/>
</dbReference>
<dbReference type="PRINTS" id="PR00148">
    <property type="entry name" value="ENOLASE"/>
</dbReference>
<dbReference type="SFLD" id="SFLDF00002">
    <property type="entry name" value="enolase"/>
    <property type="match status" value="1"/>
</dbReference>
<dbReference type="SFLD" id="SFLDG00178">
    <property type="entry name" value="enolase"/>
    <property type="match status" value="1"/>
</dbReference>
<dbReference type="SMART" id="SM01192">
    <property type="entry name" value="Enolase_C"/>
    <property type="match status" value="1"/>
</dbReference>
<dbReference type="SMART" id="SM01193">
    <property type="entry name" value="Enolase_N"/>
    <property type="match status" value="1"/>
</dbReference>
<dbReference type="SUPFAM" id="SSF51604">
    <property type="entry name" value="Enolase C-terminal domain-like"/>
    <property type="match status" value="1"/>
</dbReference>
<dbReference type="SUPFAM" id="SSF54826">
    <property type="entry name" value="Enolase N-terminal domain-like"/>
    <property type="match status" value="1"/>
</dbReference>
<dbReference type="PROSITE" id="PS00164">
    <property type="entry name" value="ENOLASE"/>
    <property type="match status" value="1"/>
</dbReference>
<gene>
    <name type="primary">ENO</name>
</gene>
<protein>
    <recommendedName>
        <fullName>Enolase</fullName>
        <ecNumber>4.2.1.11</ecNumber>
    </recommendedName>
    <alternativeName>
        <fullName>2-phospho-D-glycerate hydro-lyase</fullName>
    </alternativeName>
    <alternativeName>
        <fullName>2-phosphoglycerate dehydratase</fullName>
    </alternativeName>
</protein>
<sequence>MSILTIHARQIFDSRGNPTVEVDLKTSKGLFRAAVPSGASTGVHEALELRDTNSKAYMKKGVLTAVSNVNKIIAPALINKNIPVTNQAAIDKYMIDLDGTENKEKLGANAILGVSLAVCKAGAAEAGLPLYRYIARLAGHEDVIMPVPAFNVINGGSHAGNKLAMQEFMILPTGASSFTEAMQIGTEVYHNLKAVIKREYGLDACNVGDEGGFAPNIQDNMKGLQLLEEAIKIAGYTGKVEIGMDCAASEFHKNGKYDLDFKNPHSAESTWLSPDAMANMYKQMISKFPIVSIEDPFDQDDWETWPKLTSSTNIQIVGDDLTVTNPKRIKQAIASKACNCLLLKVNQIGSLTESIEACKLAQDSGWGVMVSHRSGETEDTFIADLVVGLCTGQIKTGAPCRSDRLAKYNQLLRIEEELGTAAKYAGKNFRHPKV</sequence>
<evidence type="ECO:0000250" key="1"/>
<evidence type="ECO:0000305" key="2"/>